<feature type="chain" id="PRO_0000123862" description="Aspartate aminotransferase">
    <location>
        <begin position="1"/>
        <end position="364"/>
    </location>
</feature>
<feature type="binding site" evidence="1">
    <location>
        <position position="23"/>
    </location>
    <ligand>
        <name>L-aspartate</name>
        <dbReference type="ChEBI" id="CHEBI:29991"/>
    </ligand>
</feature>
<feature type="binding site" evidence="1">
    <location>
        <position position="99"/>
    </location>
    <ligand>
        <name>L-aspartate</name>
        <dbReference type="ChEBI" id="CHEBI:29991"/>
    </ligand>
</feature>
<feature type="binding site" evidence="1">
    <location>
        <position position="143"/>
    </location>
    <ligand>
        <name>L-aspartate</name>
        <dbReference type="ChEBI" id="CHEBI:29991"/>
    </ligand>
</feature>
<feature type="binding site" evidence="1">
    <location>
        <position position="320"/>
    </location>
    <ligand>
        <name>L-aspartate</name>
        <dbReference type="ChEBI" id="CHEBI:29991"/>
    </ligand>
</feature>
<feature type="modified residue" description="N6-(pyridoxal phosphate)lysine" evidence="1">
    <location>
        <position position="200"/>
    </location>
</feature>
<reference key="1">
    <citation type="submission" date="1998-03" db="EMBL/GenBank/DDBJ databases">
        <title>Enzymatic characteristics of recombinant aspartate aminotransferase from Pyrococcus kodakaraensis KOD1.</title>
        <authorList>
            <person name="Jongsareejit B."/>
            <person name="Fujiwara S."/>
            <person name="Takagi M."/>
            <person name="Imanaka T."/>
        </authorList>
    </citation>
    <scope>NUCLEOTIDE SEQUENCE [GENOMIC DNA]</scope>
    <source>
        <strain>ATCC BAA-918 / JCM 12380 / KOD1</strain>
    </source>
</reference>
<reference key="2">
    <citation type="journal article" date="2005" name="Genome Res.">
        <title>Complete genome sequence of the hyperthermophilic archaeon Thermococcus kodakaraensis KOD1 and comparison with Pyrococcus genomes.</title>
        <authorList>
            <person name="Fukui T."/>
            <person name="Atomi H."/>
            <person name="Kanai T."/>
            <person name="Matsumi R."/>
            <person name="Fujiwara S."/>
            <person name="Imanaka T."/>
        </authorList>
    </citation>
    <scope>NUCLEOTIDE SEQUENCE [LARGE SCALE GENOMIC DNA]</scope>
    <source>
        <strain>ATCC BAA-918 / JCM 12380 / KOD1</strain>
    </source>
</reference>
<organism>
    <name type="scientific">Thermococcus kodakarensis (strain ATCC BAA-918 / JCM 12380 / KOD1)</name>
    <name type="common">Pyrococcus kodakaraensis (strain KOD1)</name>
    <dbReference type="NCBI Taxonomy" id="69014"/>
    <lineage>
        <taxon>Archaea</taxon>
        <taxon>Methanobacteriati</taxon>
        <taxon>Methanobacteriota</taxon>
        <taxon>Thermococci</taxon>
        <taxon>Thermococcales</taxon>
        <taxon>Thermococcaceae</taxon>
        <taxon>Thermococcus</taxon>
    </lineage>
</organism>
<keyword id="KW-0032">Aminotransferase</keyword>
<keyword id="KW-0963">Cytoplasm</keyword>
<keyword id="KW-0663">Pyridoxal phosphate</keyword>
<keyword id="KW-1185">Reference proteome</keyword>
<keyword id="KW-0808">Transferase</keyword>
<gene>
    <name type="primary">aspC</name>
    <name type="ordered locus">TK0260</name>
</gene>
<evidence type="ECO:0000250" key="1"/>
<evidence type="ECO:0000305" key="2"/>
<dbReference type="EC" id="2.6.1.1"/>
<dbReference type="EMBL" id="AB012002">
    <property type="protein sequence ID" value="BAA75925.1"/>
    <property type="molecule type" value="Genomic_DNA"/>
</dbReference>
<dbReference type="EMBL" id="AP006878">
    <property type="protein sequence ID" value="BAD84449.1"/>
    <property type="molecule type" value="Genomic_DNA"/>
</dbReference>
<dbReference type="RefSeq" id="WP_011249215.1">
    <property type="nucleotide sequence ID" value="NC_006624.1"/>
</dbReference>
<dbReference type="SMR" id="O93744"/>
<dbReference type="STRING" id="69014.TK0260"/>
<dbReference type="EnsemblBacteria" id="BAD84449">
    <property type="protein sequence ID" value="BAD84449"/>
    <property type="gene ID" value="TK0260"/>
</dbReference>
<dbReference type="GeneID" id="78446763"/>
<dbReference type="KEGG" id="tko:TK0260"/>
<dbReference type="PATRIC" id="fig|69014.16.peg.259"/>
<dbReference type="eggNOG" id="arCOG04333">
    <property type="taxonomic scope" value="Archaea"/>
</dbReference>
<dbReference type="HOGENOM" id="CLU_017584_4_3_2"/>
<dbReference type="InParanoid" id="O93744"/>
<dbReference type="OrthoDB" id="372018at2157"/>
<dbReference type="PhylomeDB" id="O93744"/>
<dbReference type="Proteomes" id="UP000000536">
    <property type="component" value="Chromosome"/>
</dbReference>
<dbReference type="GO" id="GO:0005737">
    <property type="term" value="C:cytoplasm"/>
    <property type="evidence" value="ECO:0007669"/>
    <property type="project" value="UniProtKB-SubCell"/>
</dbReference>
<dbReference type="GO" id="GO:0004069">
    <property type="term" value="F:L-aspartate:2-oxoglutarate aminotransferase activity"/>
    <property type="evidence" value="ECO:0007669"/>
    <property type="project" value="UniProtKB-EC"/>
</dbReference>
<dbReference type="GO" id="GO:0030170">
    <property type="term" value="F:pyridoxal phosphate binding"/>
    <property type="evidence" value="ECO:0007669"/>
    <property type="project" value="InterPro"/>
</dbReference>
<dbReference type="GO" id="GO:0008483">
    <property type="term" value="F:transaminase activity"/>
    <property type="evidence" value="ECO:0000318"/>
    <property type="project" value="GO_Central"/>
</dbReference>
<dbReference type="GO" id="GO:0006520">
    <property type="term" value="P:amino acid metabolic process"/>
    <property type="evidence" value="ECO:0000318"/>
    <property type="project" value="GO_Central"/>
</dbReference>
<dbReference type="GO" id="GO:0009058">
    <property type="term" value="P:biosynthetic process"/>
    <property type="evidence" value="ECO:0007669"/>
    <property type="project" value="InterPro"/>
</dbReference>
<dbReference type="CDD" id="cd00609">
    <property type="entry name" value="AAT_like"/>
    <property type="match status" value="1"/>
</dbReference>
<dbReference type="Gene3D" id="3.40.640.10">
    <property type="entry name" value="Type I PLP-dependent aspartate aminotransferase-like (Major domain)"/>
    <property type="match status" value="1"/>
</dbReference>
<dbReference type="InterPro" id="IPR004839">
    <property type="entry name" value="Aminotransferase_I/II_large"/>
</dbReference>
<dbReference type="InterPro" id="IPR050596">
    <property type="entry name" value="AspAT/PAT-like"/>
</dbReference>
<dbReference type="InterPro" id="IPR004838">
    <property type="entry name" value="NHTrfase_class1_PyrdxlP-BS"/>
</dbReference>
<dbReference type="InterPro" id="IPR015424">
    <property type="entry name" value="PyrdxlP-dep_Trfase"/>
</dbReference>
<dbReference type="InterPro" id="IPR015421">
    <property type="entry name" value="PyrdxlP-dep_Trfase_major"/>
</dbReference>
<dbReference type="PANTHER" id="PTHR46383">
    <property type="entry name" value="ASPARTATE AMINOTRANSFERASE"/>
    <property type="match status" value="1"/>
</dbReference>
<dbReference type="PANTHER" id="PTHR46383:SF1">
    <property type="entry name" value="ASPARTATE AMINOTRANSFERASE"/>
    <property type="match status" value="1"/>
</dbReference>
<dbReference type="Pfam" id="PF00155">
    <property type="entry name" value="Aminotran_1_2"/>
    <property type="match status" value="1"/>
</dbReference>
<dbReference type="SUPFAM" id="SSF53383">
    <property type="entry name" value="PLP-dependent transferases"/>
    <property type="match status" value="1"/>
</dbReference>
<dbReference type="PROSITE" id="PS00105">
    <property type="entry name" value="AA_TRANSFER_CLASS_1"/>
    <property type="match status" value="1"/>
</dbReference>
<sequence length="364" mass="41231">MFNVYEFFNRINEVRPESRLDAGQPDIPVRREIIEEAVESLRRGETGYTSTGGIRELRERIAEFEGVSADEVIVAPGAKILIAAEIASAKKVAVVSPRWNAYSLIARQFWREVEVIKTTLDERWIPRVEEIKADLIIINYPNNPTGRVLSGKEIRGLLDVAEENGVKVLSDEVYAELSFTRFTPARELYENVVTVKGFSKLYSMTGFRLGYAIGERNEIRRIQRFIESTVTCVPPFVQRAGVKALELRDELIKEVRRAYLERVRMASKMLRGFDFVEPEGAFYIFLRTPQDGMAFAERLLSRGVAVFPGMAFGDYPNFIRISLSGKGLERGLRVIREELECALESRATEGWEGSSRGVSAEGSR</sequence>
<protein>
    <recommendedName>
        <fullName>Aspartate aminotransferase</fullName>
        <shortName>AspAT</shortName>
        <ecNumber>2.6.1.1</ecNumber>
    </recommendedName>
    <alternativeName>
        <fullName>Transaminase A</fullName>
    </alternativeName>
</protein>
<accession>O93744</accession>
<name>AAT_THEKO</name>
<proteinExistence type="inferred from homology"/>
<comment type="catalytic activity">
    <reaction>
        <text>L-aspartate + 2-oxoglutarate = oxaloacetate + L-glutamate</text>
        <dbReference type="Rhea" id="RHEA:21824"/>
        <dbReference type="ChEBI" id="CHEBI:16452"/>
        <dbReference type="ChEBI" id="CHEBI:16810"/>
        <dbReference type="ChEBI" id="CHEBI:29985"/>
        <dbReference type="ChEBI" id="CHEBI:29991"/>
        <dbReference type="EC" id="2.6.1.1"/>
    </reaction>
</comment>
<comment type="cofactor">
    <cofactor evidence="1">
        <name>pyridoxal 5'-phosphate</name>
        <dbReference type="ChEBI" id="CHEBI:597326"/>
    </cofactor>
</comment>
<comment type="subunit">
    <text evidence="1">Homodimer.</text>
</comment>
<comment type="subcellular location">
    <subcellularLocation>
        <location evidence="1">Cytoplasm</location>
    </subcellularLocation>
</comment>
<comment type="similarity">
    <text evidence="2">Belongs to the class-I pyridoxal-phosphate-dependent aminotransferase family.</text>
</comment>